<reference key="1">
    <citation type="submission" date="2008-10" db="EMBL/GenBank/DDBJ databases">
        <title>Genome sequence of Clostridium botulinum A2 Kyoto.</title>
        <authorList>
            <person name="Shrivastava S."/>
            <person name="Brinkac L.M."/>
            <person name="Brown J.L."/>
            <person name="Bruce D."/>
            <person name="Detter C.C."/>
            <person name="Johnson E.A."/>
            <person name="Munk C.A."/>
            <person name="Smith L.A."/>
            <person name="Smith T.J."/>
            <person name="Sutton G."/>
            <person name="Brettin T.S."/>
        </authorList>
    </citation>
    <scope>NUCLEOTIDE SEQUENCE [LARGE SCALE GENOMIC DNA]</scope>
    <source>
        <strain>Kyoto / Type A2</strain>
    </source>
</reference>
<proteinExistence type="inferred from homology"/>
<dbReference type="EMBL" id="CP001581">
    <property type="protein sequence ID" value="ACO84641.1"/>
    <property type="molecule type" value="Genomic_DNA"/>
</dbReference>
<dbReference type="RefSeq" id="WP_003393779.1">
    <property type="nucleotide sequence ID" value="NC_012563.1"/>
</dbReference>
<dbReference type="SMR" id="C1FSM0"/>
<dbReference type="KEGG" id="cby:CLM_2743"/>
<dbReference type="eggNOG" id="COG2739">
    <property type="taxonomic scope" value="Bacteria"/>
</dbReference>
<dbReference type="HOGENOM" id="CLU_129218_0_1_9"/>
<dbReference type="Proteomes" id="UP000001374">
    <property type="component" value="Chromosome"/>
</dbReference>
<dbReference type="Gene3D" id="1.10.10.10">
    <property type="entry name" value="Winged helix-like DNA-binding domain superfamily/Winged helix DNA-binding domain"/>
    <property type="match status" value="1"/>
</dbReference>
<dbReference type="HAMAP" id="MF_00245">
    <property type="entry name" value="UPF0122"/>
    <property type="match status" value="1"/>
</dbReference>
<dbReference type="InterPro" id="IPR013324">
    <property type="entry name" value="RNA_pol_sigma_r3/r4-like"/>
</dbReference>
<dbReference type="InterPro" id="IPR007394">
    <property type="entry name" value="UPF0122"/>
</dbReference>
<dbReference type="InterPro" id="IPR054831">
    <property type="entry name" value="UPF0122_fam_protein"/>
</dbReference>
<dbReference type="InterPro" id="IPR036388">
    <property type="entry name" value="WH-like_DNA-bd_sf"/>
</dbReference>
<dbReference type="NCBIfam" id="NF001072">
    <property type="entry name" value="PRK00118.2-2"/>
    <property type="match status" value="1"/>
</dbReference>
<dbReference type="NCBIfam" id="NF001074">
    <property type="entry name" value="PRK00118.2-4"/>
    <property type="match status" value="1"/>
</dbReference>
<dbReference type="NCBIfam" id="NF045758">
    <property type="entry name" value="YlxM"/>
    <property type="match status" value="1"/>
</dbReference>
<dbReference type="PANTHER" id="PTHR40083">
    <property type="entry name" value="UPF0122 PROTEIN CBO2450/CLC_2298"/>
    <property type="match status" value="1"/>
</dbReference>
<dbReference type="PANTHER" id="PTHR40083:SF1">
    <property type="entry name" value="UPF0122 PROTEIN YLXM"/>
    <property type="match status" value="1"/>
</dbReference>
<dbReference type="Pfam" id="PF04297">
    <property type="entry name" value="UPF0122"/>
    <property type="match status" value="1"/>
</dbReference>
<dbReference type="SUPFAM" id="SSF88659">
    <property type="entry name" value="Sigma3 and sigma4 domains of RNA polymerase sigma factors"/>
    <property type="match status" value="1"/>
</dbReference>
<evidence type="ECO:0000255" key="1">
    <source>
        <dbReference type="HAMAP-Rule" id="MF_00245"/>
    </source>
</evidence>
<organism>
    <name type="scientific">Clostridium botulinum (strain Kyoto / Type A2)</name>
    <dbReference type="NCBI Taxonomy" id="536232"/>
    <lineage>
        <taxon>Bacteria</taxon>
        <taxon>Bacillati</taxon>
        <taxon>Bacillota</taxon>
        <taxon>Clostridia</taxon>
        <taxon>Eubacteriales</taxon>
        <taxon>Clostridiaceae</taxon>
        <taxon>Clostridium</taxon>
    </lineage>
</organism>
<gene>
    <name type="ordered locus">CLM_2743</name>
</gene>
<protein>
    <recommendedName>
        <fullName evidence="1">UPF0122 protein CLM_2743</fullName>
    </recommendedName>
</protein>
<feature type="chain" id="PRO_1000197589" description="UPF0122 protein CLM_2743">
    <location>
        <begin position="1"/>
        <end position="110"/>
    </location>
</feature>
<comment type="function">
    <text evidence="1">Might take part in the signal recognition particle (SRP) pathway. This is inferred from the conservation of its genetic proximity to ftsY/ffh. May be a regulatory protein.</text>
</comment>
<comment type="similarity">
    <text evidence="1">Belongs to the UPF0122 family.</text>
</comment>
<sequence length="110" mass="13224">MEEIVEMSLLLDFYGSLLTEKQNKIMDLYYNNDYSLKEISELTNTSRQAVHDIVKRCHKALLQYEEKLHMMERFINLENSKEKLLNMLNKVTKENIKEIDHIKKYIIDNI</sequence>
<accession>C1FSM0</accession>
<name>Y2743_CLOBJ</name>